<gene>
    <name evidence="1" type="primary">rpmI</name>
    <name type="ordered locus">YpAngola_A2623</name>
</gene>
<feature type="chain" id="PRO_1000127432" description="Large ribosomal subunit protein bL35">
    <location>
        <begin position="1"/>
        <end position="65"/>
    </location>
</feature>
<accession>A9R0A6</accession>
<evidence type="ECO:0000255" key="1">
    <source>
        <dbReference type="HAMAP-Rule" id="MF_00514"/>
    </source>
</evidence>
<evidence type="ECO:0000305" key="2"/>
<dbReference type="EMBL" id="CP000901">
    <property type="protein sequence ID" value="ABX86058.1"/>
    <property type="molecule type" value="Genomic_DNA"/>
</dbReference>
<dbReference type="RefSeq" id="WP_002211834.1">
    <property type="nucleotide sequence ID" value="NZ_CP009935.1"/>
</dbReference>
<dbReference type="SMR" id="A9R0A6"/>
<dbReference type="GeneID" id="97456073"/>
<dbReference type="KEGG" id="ypg:YpAngola_A2623"/>
<dbReference type="PATRIC" id="fig|349746.12.peg.3650"/>
<dbReference type="GO" id="GO:0022625">
    <property type="term" value="C:cytosolic large ribosomal subunit"/>
    <property type="evidence" value="ECO:0007669"/>
    <property type="project" value="TreeGrafter"/>
</dbReference>
<dbReference type="GO" id="GO:0003735">
    <property type="term" value="F:structural constituent of ribosome"/>
    <property type="evidence" value="ECO:0007669"/>
    <property type="project" value="InterPro"/>
</dbReference>
<dbReference type="GO" id="GO:0006412">
    <property type="term" value="P:translation"/>
    <property type="evidence" value="ECO:0007669"/>
    <property type="project" value="UniProtKB-UniRule"/>
</dbReference>
<dbReference type="FunFam" id="4.10.410.60:FF:000001">
    <property type="entry name" value="50S ribosomal protein L35"/>
    <property type="match status" value="1"/>
</dbReference>
<dbReference type="Gene3D" id="4.10.410.60">
    <property type="match status" value="1"/>
</dbReference>
<dbReference type="HAMAP" id="MF_00514">
    <property type="entry name" value="Ribosomal_bL35"/>
    <property type="match status" value="1"/>
</dbReference>
<dbReference type="InterPro" id="IPR001706">
    <property type="entry name" value="Ribosomal_bL35"/>
</dbReference>
<dbReference type="InterPro" id="IPR021137">
    <property type="entry name" value="Ribosomal_bL35-like"/>
</dbReference>
<dbReference type="InterPro" id="IPR018265">
    <property type="entry name" value="Ribosomal_bL35_CS"/>
</dbReference>
<dbReference type="InterPro" id="IPR037229">
    <property type="entry name" value="Ribosomal_bL35_sf"/>
</dbReference>
<dbReference type="NCBIfam" id="TIGR00001">
    <property type="entry name" value="rpmI_bact"/>
    <property type="match status" value="1"/>
</dbReference>
<dbReference type="PANTHER" id="PTHR33343">
    <property type="entry name" value="54S RIBOSOMAL PROTEIN BL35M"/>
    <property type="match status" value="1"/>
</dbReference>
<dbReference type="PANTHER" id="PTHR33343:SF1">
    <property type="entry name" value="LARGE RIBOSOMAL SUBUNIT PROTEIN BL35M"/>
    <property type="match status" value="1"/>
</dbReference>
<dbReference type="Pfam" id="PF01632">
    <property type="entry name" value="Ribosomal_L35p"/>
    <property type="match status" value="1"/>
</dbReference>
<dbReference type="PRINTS" id="PR00064">
    <property type="entry name" value="RIBOSOMALL35"/>
</dbReference>
<dbReference type="SUPFAM" id="SSF143034">
    <property type="entry name" value="L35p-like"/>
    <property type="match status" value="1"/>
</dbReference>
<dbReference type="PROSITE" id="PS00936">
    <property type="entry name" value="RIBOSOMAL_L35"/>
    <property type="match status" value="1"/>
</dbReference>
<proteinExistence type="inferred from homology"/>
<reference key="1">
    <citation type="journal article" date="2010" name="J. Bacteriol.">
        <title>Genome sequence of the deep-rooted Yersinia pestis strain Angola reveals new insights into the evolution and pangenome of the plague bacterium.</title>
        <authorList>
            <person name="Eppinger M."/>
            <person name="Worsham P.L."/>
            <person name="Nikolich M.P."/>
            <person name="Riley D.R."/>
            <person name="Sebastian Y."/>
            <person name="Mou S."/>
            <person name="Achtman M."/>
            <person name="Lindler L.E."/>
            <person name="Ravel J."/>
        </authorList>
    </citation>
    <scope>NUCLEOTIDE SEQUENCE [LARGE SCALE GENOMIC DNA]</scope>
    <source>
        <strain>Angola</strain>
    </source>
</reference>
<organism>
    <name type="scientific">Yersinia pestis bv. Antiqua (strain Angola)</name>
    <dbReference type="NCBI Taxonomy" id="349746"/>
    <lineage>
        <taxon>Bacteria</taxon>
        <taxon>Pseudomonadati</taxon>
        <taxon>Pseudomonadota</taxon>
        <taxon>Gammaproteobacteria</taxon>
        <taxon>Enterobacterales</taxon>
        <taxon>Yersiniaceae</taxon>
        <taxon>Yersinia</taxon>
    </lineage>
</organism>
<sequence length="65" mass="7319">MPKIKTVRGAAKRFKKTANGGFKRKHANLRHILTKKATKRKRHLRPKGLVSKNDLGLVVACLPYA</sequence>
<comment type="similarity">
    <text evidence="1">Belongs to the bacterial ribosomal protein bL35 family.</text>
</comment>
<name>RL35_YERPG</name>
<protein>
    <recommendedName>
        <fullName evidence="1">Large ribosomal subunit protein bL35</fullName>
    </recommendedName>
    <alternativeName>
        <fullName evidence="2">50S ribosomal protein L35</fullName>
    </alternativeName>
</protein>
<keyword id="KW-0687">Ribonucleoprotein</keyword>
<keyword id="KW-0689">Ribosomal protein</keyword>